<sequence length="1107" mass="123631">MDGKRRPGPGPGVPPKRARGGLWDDDDAPRPSQFEEDLALMEEMEAEHRLQEQEEEELQSVLEGVADGQVPPSAIDPRWLRPTPPALDPQTEPLIFQQLEIDHYVGPAQPVPGGPPPSRGSVPVLRAFGVTDEGFSVCCHIHGFAPYFYTPAPPGFGPEHMGDLQRELNLAISRDSRGGRELTGPAVLAVELCSRESMFGYHGHGPSPFLRITVALPRLVAPARRLLEQGIRVAGLGTPSFAPYEANVDFEIRFMVDTDIVGCNWLELPAGKYALRLKEKATQCQLEADVLWSDVVSHPPEGPWQRIAPLRVLSFDIECAGRKGIFPEPERDPVIQICSLGLRWGEPEPFLRLALTLRPCAPILGAKVQSYEKEEDLLQAWSTFIRIMDPDVITGYNIQNFDLPYLISRAQTLKVQTFPFLGRVAGLCSNIRDSSFQSKQTGRRDTKVVSMVGRVQMDMLQVLLREYKLRSYTLNAVSFHFLGEQKEDVQHSIITDLQNGNDQTRRRLAVYCLKDAYLPLRLLERLMVLVNAVEMARVTGVPLSYLLSRGQQVKVVSQLLRQAMHEGLLMPVVKSEGGEDYTGATVIEPLKGYYDVPIATLDFSSLYPSIMMAHNLCYTTLLRPGTAQKLGLTEDQFIRTPTGDEFVKTSVRKGLLPQILENLLSARKRAKAELAKETDPLRRQVLDGRQLALKVSANSVYGFTGAQVGKLPCLEISQSVTGFGRQMIEKTKQLVESKYTVENGYSTSAKVVYGDTDSVMCRFGVSSVAEAMALGREAADWVSGHFPSPIRLEFEKVYFPYLLISKKRYAGLLFSSRPDAHDRMDCKGLEAVRRDNCPLVANLVTASLRRLLIDRDPEGAVAHAQDVISDLLCNRIDISQLVITKELTRAASDYAGKQAHVELAERMRKRDPGSAPSLGDRVPYVIISAAKGVAAYMKSEDPLFVLEHSLPIDTQYYLEQQLAKPLLRIFEPILGEGRAEAVLLRGDHTRCKTVLTGKVGGLLAFAKRRNCCIGCRTVLSHQGAVCEFCQPRESELYQKEVSHLNALEERFSRLWTQCQRCQGSLHEDVICTSRDCPIFYMRKKVRKDLEDQEQLLRRFGPPGPEAW</sequence>
<keyword id="KW-0002">3D-structure</keyword>
<keyword id="KW-0004">4Fe-4S</keyword>
<keyword id="KW-0225">Disease variant</keyword>
<keyword id="KW-0227">DNA damage</keyword>
<keyword id="KW-0228">DNA excision</keyword>
<keyword id="KW-0234">DNA repair</keyword>
<keyword id="KW-0235">DNA replication</keyword>
<keyword id="KW-0238">DNA-binding</keyword>
<keyword id="KW-0239">DNA-directed DNA polymerase</keyword>
<keyword id="KW-0269">Exonuclease</keyword>
<keyword id="KW-0378">Hydrolase</keyword>
<keyword id="KW-0408">Iron</keyword>
<keyword id="KW-0411">Iron-sulfur</keyword>
<keyword id="KW-1017">Isopeptide bond</keyword>
<keyword id="KW-0479">Metal-binding</keyword>
<keyword id="KW-0488">Methylation</keyword>
<keyword id="KW-0540">Nuclease</keyword>
<keyword id="KW-0548">Nucleotidyltransferase</keyword>
<keyword id="KW-0539">Nucleus</keyword>
<keyword id="KW-1267">Proteomics identification</keyword>
<keyword id="KW-1185">Reference proteome</keyword>
<keyword id="KW-0808">Transferase</keyword>
<keyword id="KW-0832">Ubl conjugation</keyword>
<keyword id="KW-0862">Zinc</keyword>
<keyword id="KW-0863">Zinc-finger</keyword>
<reference key="1">
    <citation type="journal article" date="1991" name="Proc. Natl. Acad. Sci. U.S.A.">
        <title>Primary structure of the catalytic subunit of human DNA polymerase delta and chromosomal location of the gene.</title>
        <authorList>
            <person name="Chung D.W."/>
            <person name="Zhang J."/>
            <person name="Tan C.-K."/>
            <person name="Davie E.W."/>
            <person name="So A.G."/>
            <person name="Downey K.M."/>
        </authorList>
    </citation>
    <scope>NUCLEOTIDE SEQUENCE [MRNA]</scope>
    <scope>VARIANT TRP-30</scope>
    <source>
        <tissue>Hepatoma</tissue>
    </source>
</reference>
<reference key="2">
    <citation type="journal article" date="1992" name="Nucleic Acids Res.">
        <title>Molecular cloning of the cDNA for the catalytic subunit of human DNA polymerase delta.</title>
        <authorList>
            <person name="Yang C.-L."/>
            <person name="Chang L.-S."/>
            <person name="Zhang P."/>
            <person name="Hao H."/>
            <person name="Zhu L."/>
            <person name="Toomey N.L."/>
            <person name="Lee M.Y.W.T."/>
        </authorList>
    </citation>
    <scope>NUCLEOTIDE SEQUENCE [MRNA]</scope>
    <scope>VARIANTS HIS-119 AND ASN-173</scope>
    <scope>INDUCTION BY SERUM</scope>
    <source>
        <tissue>Cervix carcinoma</tissue>
    </source>
</reference>
<reference key="3">
    <citation type="submission" date="2002-07" db="EMBL/GenBank/DDBJ databases">
        <authorList>
            <consortium name="NIEHS SNPs program"/>
        </authorList>
    </citation>
    <scope>NUCLEOTIDE SEQUENCE [GENOMIC DNA]</scope>
    <scope>VARIANTS HIS-19; TRP-30; HIS-119; ASN-173; HIS-177; HIS-849 AND GLN-1086</scope>
</reference>
<reference key="4">
    <citation type="journal article" date="2004" name="Genome Res.">
        <title>The status, quality, and expansion of the NIH full-length cDNA project: the Mammalian Gene Collection (MGC).</title>
        <authorList>
            <consortium name="The MGC Project Team"/>
        </authorList>
    </citation>
    <scope>NUCLEOTIDE SEQUENCE [LARGE SCALE MRNA]</scope>
    <scope>VARIANT HIS-119</scope>
    <source>
        <tissue>Lymph</tissue>
    </source>
</reference>
<reference key="5">
    <citation type="journal article" date="2001" name="J. Biochem.">
        <title>The human homologue of fission Yeast cdc27, p66, is a component of active human DNA polymerase delta.</title>
        <authorList>
            <person name="Shikata K."/>
            <person name="Ohta S."/>
            <person name="Yamada K."/>
            <person name="Obuse C."/>
            <person name="Yoshikawa H."/>
            <person name="Tsurimoto T."/>
        </authorList>
    </citation>
    <scope>INTERACTION WITH POLD2 AND PCNA</scope>
</reference>
<reference key="6">
    <citation type="journal article" date="2001" name="J. Biol. Chem.">
        <title>Mediation of proliferating cell nuclear antigen (PCNA)-dependent DNA replication through a conserved p21(Cip1)-like PCNA-binding motif present in the third subunit of human DNA polymerase delta.</title>
        <authorList>
            <person name="Ducoux M."/>
            <person name="Urbach S."/>
            <person name="Baldacci G."/>
            <person name="Huebscher U."/>
            <person name="Koundrioukoff S."/>
            <person name="Christensen J."/>
            <person name="Hughes P."/>
        </authorList>
    </citation>
    <scope>INTERACTION WITH POLD3</scope>
    <scope>SUBCELLULAR LOCATION</scope>
</reference>
<reference key="7">
    <citation type="journal article" date="2002" name="Biochemistry">
        <title>Reconstitution and characterization of the human DNA polymerase delta four-subunit holoenzyme.</title>
        <authorList>
            <person name="Xie B."/>
            <person name="Mazloum N."/>
            <person name="Liu L."/>
            <person name="Rahmeh A."/>
            <person name="Li H."/>
            <person name="Lee M.Y."/>
        </authorList>
    </citation>
    <scope>INTERACTION WITH PCNA AND POLD4</scope>
    <scope>CHARACTERIZATION OF POL-DELTA2 AND POL-DELTA4 COMPLEXES</scope>
</reference>
<reference key="8">
    <citation type="journal article" date="2003" name="J. Biol. Chem.">
        <title>Identification of a novel protein, PDIP38, that interacts with the p50 subunit of DNA polymerase delta and proliferating cell nuclear antigen.</title>
        <authorList>
            <person name="Liu L."/>
            <person name="Rodriguez-Belmonte E.M."/>
            <person name="Mazloum N."/>
            <person name="Xie B."/>
            <person name="Lee M.Y.W.T."/>
        </authorList>
    </citation>
    <scope>INTERACTION WITH POLD2 AND POLDIP2</scope>
    <scope>STIMULATION BY PCNA</scope>
</reference>
<reference key="9">
    <citation type="journal article" date="2005" name="Genes Cells">
        <title>Human Werner helicase interacting protein 1 (WRNIP1) functions as a novel modulator for DNA polymerase delta.</title>
        <authorList>
            <person name="Tsurimoto T."/>
            <person name="Shinozaki A."/>
            <person name="Yano M."/>
            <person name="Seki M."/>
            <person name="Enomoto T."/>
        </authorList>
    </citation>
    <scope>INTERACTION WITH WRNIP1</scope>
</reference>
<reference key="10">
    <citation type="journal article" date="2006" name="J. Biol. Chem.">
        <title>Functional roles of p12, the fourth subunit of human DNA polymerase delta.</title>
        <authorList>
            <person name="Li H."/>
            <person name="Xie B."/>
            <person name="Zhou Y."/>
            <person name="Rahmeh A."/>
            <person name="Trusa S."/>
            <person name="Zhang S."/>
            <person name="Gao Y."/>
            <person name="Lee E.Y."/>
            <person name="Lee M.Y."/>
        </authorList>
    </citation>
    <scope>FUNCTION</scope>
    <scope>CATALYTIC ACTIVITY</scope>
    <scope>INTERACTION WITH POLD2; POLD4 AND PCNA</scope>
</reference>
<reference key="11">
    <citation type="journal article" date="2007" name="J. Biol. Chem.">
        <title>A novel DNA damage response: rapid degradation of the p12 subunit of dna polymerase delta.</title>
        <authorList>
            <person name="Zhang S."/>
            <person name="Zhou Y."/>
            <person name="Trusa S."/>
            <person name="Meng X."/>
            <person name="Lee E.Y."/>
            <person name="Lee M.Y."/>
        </authorList>
    </citation>
    <scope>IDENTIFICATION IN POL-DELTA COMPLEX</scope>
</reference>
<reference key="12">
    <citation type="journal article" date="2008" name="Proc. Natl. Acad. Sci. U.S.A.">
        <title>A quantitative atlas of mitotic phosphorylation.</title>
        <authorList>
            <person name="Dephoure N."/>
            <person name="Zhou C."/>
            <person name="Villen J."/>
            <person name="Beausoleil S.A."/>
            <person name="Bakalarski C.E."/>
            <person name="Elledge S.J."/>
            <person name="Gygi S.P."/>
        </authorList>
    </citation>
    <scope>IDENTIFICATION BY MASS SPECTROMETRY [LARGE SCALE ANALYSIS]</scope>
    <source>
        <tissue>Cervix carcinoma</tissue>
    </source>
</reference>
<reference key="13">
    <citation type="journal article" date="2009" name="Nucleic Acids Res.">
        <title>DNA damage alters DNA polymerase delta to a form that exhibits increased discrimination against modified template bases and mismatched primers.</title>
        <authorList>
            <person name="Meng X."/>
            <person name="Zhou Y."/>
            <person name="Zhang S."/>
            <person name="Lee E.Y."/>
            <person name="Frick D.N."/>
            <person name="Lee M.Y."/>
        </authorList>
    </citation>
    <scope>FUNCTION</scope>
    <scope>CATALYTIC ACTIVITY</scope>
    <scope>MUTAGENESIS OF ASP-402</scope>
    <scope>CHARACTERIZATION OF POL-DELTA3 AND POL-DELTA4</scope>
    <scope>ACTIVITY REGULATION</scope>
</reference>
<reference key="14">
    <citation type="journal article" date="2010" name="Biochemistry">
        <title>The p12 subunit of human polymerase delta modulates the rate and fidelity of DNA synthesis.</title>
        <authorList>
            <person name="Meng X."/>
            <person name="Zhou Y."/>
            <person name="Lee E.Y."/>
            <person name="Lee M.Y."/>
            <person name="Frick D.N."/>
        </authorList>
    </citation>
    <scope>FUNCTION</scope>
    <scope>CATALYTIC ACTIVITY</scope>
    <scope>CHARACTERIZATION OF POL-DELTA3 AND POL-DELTA4</scope>
    <scope>BIOPHYSICOCHEMICAL PROPERTIES</scope>
    <scope>MUTAGENESIS OF ASP-402</scope>
</reference>
<reference key="15">
    <citation type="journal article" date="2010" name="Mol. Cell">
        <title>Three DNA polymerases, recruited by different mechanisms, carry out NER repair synthesis in human cells.</title>
        <authorList>
            <person name="Ogi T."/>
            <person name="Limsirichaikul S."/>
            <person name="Overmeer R.M."/>
            <person name="Volker M."/>
            <person name="Takenaka K."/>
            <person name="Cloney R."/>
            <person name="Nakazawa Y."/>
            <person name="Niimi A."/>
            <person name="Miki Y."/>
            <person name="Jaspers N.G."/>
            <person name="Mullenders L.H."/>
            <person name="Yamashita S."/>
            <person name="Fousteri M.I."/>
            <person name="Lehmann A.R."/>
        </authorList>
    </citation>
    <scope>FUNCTION IN NUCLEOTIDE EXCISION REPAIR</scope>
    <scope>SUBCELLULAR LOCATION</scope>
</reference>
<reference key="16">
    <citation type="journal article" date="2011" name="BMC Syst. Biol.">
        <title>Initial characterization of the human central proteome.</title>
        <authorList>
            <person name="Burkard T.R."/>
            <person name="Planyavsky M."/>
            <person name="Kaupe I."/>
            <person name="Breitwieser F.P."/>
            <person name="Buerckstuemmer T."/>
            <person name="Bennett K.L."/>
            <person name="Superti-Furga G."/>
            <person name="Colinge J."/>
        </authorList>
    </citation>
    <scope>IDENTIFICATION BY MASS SPECTROMETRY [LARGE SCALE ANALYSIS]</scope>
</reference>
<reference key="17">
    <citation type="journal article" date="2012" name="Cell Cycle">
        <title>Spatiotemporal recruitment of human DNA polymerase delta to sites of UV damage.</title>
        <authorList>
            <person name="Chea J."/>
            <person name="Zhang S."/>
            <person name="Zhao H."/>
            <person name="Zhang Z."/>
            <person name="Lee E.Y."/>
            <person name="Darzynkiewicz Z."/>
            <person name="Lee M.Y."/>
        </authorList>
    </citation>
    <scope>SUBCELLULAR LOCATION</scope>
    <scope>IDENTIFICATION IN POLD COMPLEX</scope>
    <scope>DEVELOPMENTAL STAGE</scope>
</reference>
<reference key="18">
    <citation type="journal article" date="2013" name="Cell Metab.">
        <title>Human CIA2A-FAM96A and CIA2B-FAM96B integrate iron homeostasis and maturation of different subsets of cytosolic-nuclear iron-sulfur proteins.</title>
        <authorList>
            <person name="Stehling O."/>
            <person name="Mascarenhas J."/>
            <person name="Vashisht A.A."/>
            <person name="Sheftel A.D."/>
            <person name="Niggemeyer B."/>
            <person name="Roesser R."/>
            <person name="Pierik A.J."/>
            <person name="Wohlschlegel J.A."/>
            <person name="Lill R."/>
        </authorList>
    </citation>
    <scope>INTERACTION WITH CIAO1</scope>
</reference>
<reference key="19">
    <citation type="journal article" date="2018" name="Cell Metab.">
        <title>Human CIA2A-FAM96A and CIA2B-FAM96B Integrate Iron Homeostasis and Maturation of Different Subsets of Cytosolic-Nuclear Iron-Sulfur Proteins.</title>
        <authorList>
            <person name="Stehling O."/>
            <person name="Mascarenhas J."/>
            <person name="Vashisht A.A."/>
            <person name="Sheftel A.D."/>
            <person name="Niggemeyer B."/>
            <person name="Roesser R."/>
            <person name="Pierik A.J."/>
            <person name="Wohlschlegel J.A."/>
            <person name="Lill R."/>
        </authorList>
    </citation>
    <scope>ERRATUM OF PUBMED:23891004</scope>
</reference>
<reference key="20">
    <citation type="journal article" date="2013" name="DNA Repair">
        <title>Dynamics of enzymatic interactions during short flap human Okazaki fragment processing by two forms of human DNA polymerase delta.</title>
        <authorList>
            <person name="Lin S.H."/>
            <person name="Wang X."/>
            <person name="Zhang S."/>
            <person name="Zhang Z."/>
            <person name="Lee E.Y."/>
            <person name="Lee M.Y."/>
        </authorList>
    </citation>
    <scope>FUNCTION IN OKAZAKI FRAGMENT PROCESSING</scope>
</reference>
<reference key="21">
    <citation type="journal article" date="2013" name="J. Biol. Chem.">
        <title>A novel function of CRL4(Cdt2): regulation of the subunit structure of DNA polymerase delta in response to DNA damage and during the S phase.</title>
        <authorList>
            <person name="Zhang S."/>
            <person name="Zhao H."/>
            <person name="Darzynkiewicz Z."/>
            <person name="Zhou P."/>
            <person name="Zhang Z."/>
            <person name="Lee E.Y."/>
            <person name="Lee M.Y."/>
        </authorList>
    </citation>
    <scope>POL-DELTA3 COMPLEX EXPRESSION DURING CELL CYCLE</scope>
</reference>
<reference key="22">
    <citation type="journal article" date="2013" name="J. Biol. Chem.">
        <title>Degradation of p12 subunit by CRL4Cdt2 E3 ligase inhibits fork progression after DNA damage.</title>
        <authorList>
            <person name="Terai K."/>
            <person name="Shibata E."/>
            <person name="Abbas T."/>
            <person name="Dutta A."/>
        </authorList>
    </citation>
    <scope>FUNCTION</scope>
    <scope>INTERACTION WITH PCNA</scope>
</reference>
<reference key="23">
    <citation type="journal article" date="2013" name="Nat. Genet.">
        <title>An in-frame deletion at the polymerase active site of POLD1 causes a multisystem disorder with lipodystrophy.</title>
        <authorList>
            <person name="Weedon M.N."/>
            <person name="Ellard S."/>
            <person name="Prindle M.J."/>
            <person name="Caswell R."/>
            <person name="Allen H.L."/>
            <person name="Oram R."/>
            <person name="Godbole K."/>
            <person name="Yajnik C.S."/>
            <person name="Sbraccia P."/>
            <person name="Novelli G."/>
            <person name="Turnpenny P."/>
            <person name="McCann E."/>
            <person name="Goh K.J."/>
            <person name="Wang Y."/>
            <person name="Fulford J."/>
            <person name="McCulloch L.J."/>
            <person name="Savage D.B."/>
            <person name="O'Rahilly S."/>
            <person name="Kos K."/>
            <person name="Loeb L.A."/>
            <person name="Semple R.K."/>
            <person name="Hattersley A.T."/>
        </authorList>
    </citation>
    <scope>TISSUE SPECIFICITY</scope>
    <scope>VARIANT MDPL SER-605 DEL</scope>
</reference>
<reference key="24">
    <citation type="journal article" date="2013" name="Proc. Natl. Acad. Sci. U.S.A.">
        <title>DNA polymerase delta-interacting protein 2 is a processivity factor for DNA polymerase lambda during 8-oxo-7,8-dihydroguanine bypass.</title>
        <authorList>
            <person name="Maga G."/>
            <person name="Crespan E."/>
            <person name="Markkanen E."/>
            <person name="Imhof R."/>
            <person name="Furrer A."/>
            <person name="Villani G."/>
            <person name="Huebscher U."/>
            <person name="van Loon B."/>
        </authorList>
    </citation>
    <scope>FUNCTION</scope>
    <scope>INTERACTION WITH POLDIP2</scope>
</reference>
<reference key="25">
    <citation type="journal article" date="2014" name="Mol. Cell. Proteomics">
        <title>Immunoaffinity enrichment and mass spectrometry analysis of protein methylation.</title>
        <authorList>
            <person name="Guo A."/>
            <person name="Gu H."/>
            <person name="Zhou J."/>
            <person name="Mulhern D."/>
            <person name="Wang Y."/>
            <person name="Lee K.A."/>
            <person name="Yang V."/>
            <person name="Aguiar M."/>
            <person name="Kornhauser J."/>
            <person name="Jia X."/>
            <person name="Ren J."/>
            <person name="Beausoleil S.A."/>
            <person name="Silva J.C."/>
            <person name="Vemulapalli V."/>
            <person name="Bedford M.T."/>
            <person name="Comb M.J."/>
        </authorList>
    </citation>
    <scope>METHYLATION [LARGE SCALE ANALYSIS] AT ARG-19</scope>
    <scope>IDENTIFICATION BY MASS SPECTROMETRY [LARGE SCALE ANALYSIS]</scope>
    <source>
        <tissue>Colon carcinoma</tissue>
    </source>
</reference>
<reference key="26">
    <citation type="journal article" date="2014" name="Nucleic Acids Res.">
        <title>CBP and p300 acetylate PCNA to link its degradation with nucleotide excision repair synthesis.</title>
        <authorList>
            <person name="Cazzalini O."/>
            <person name="Sommatis S."/>
            <person name="Tillhon M."/>
            <person name="Dutto I."/>
            <person name="Bachi A."/>
            <person name="Rapp A."/>
            <person name="Nardo T."/>
            <person name="Scovassi A.I."/>
            <person name="Necchi D."/>
            <person name="Cardoso M.C."/>
            <person name="Stivala L.A."/>
            <person name="Prosperi E."/>
        </authorList>
    </citation>
    <scope>INTERACTION WITH PCNA</scope>
</reference>
<reference key="27">
    <citation type="journal article" date="2014" name="Science">
        <title>Break-induced replication repair of damaged forks induces genomic duplications in human cells.</title>
        <authorList>
            <person name="Costantino L."/>
            <person name="Sotiriou S.K."/>
            <person name="Rantala J.K."/>
            <person name="Magin S."/>
            <person name="Mladenov E."/>
            <person name="Helleday T."/>
            <person name="Haber J.E."/>
            <person name="Iliakis G."/>
            <person name="Kallioniemi O.P."/>
            <person name="Halazonetis T.D."/>
        </authorList>
    </citation>
    <scope>FUNCTION IN BIR</scope>
</reference>
<reference key="28">
    <citation type="journal article" date="2017" name="Nat. Struct. Mol. Biol.">
        <title>Site-specific mapping of the human SUMO proteome reveals co-modification with phosphorylation.</title>
        <authorList>
            <person name="Hendriks I.A."/>
            <person name="Lyon D."/>
            <person name="Young C."/>
            <person name="Jensen L.J."/>
            <person name="Vertegaal A.C."/>
            <person name="Nielsen M.L."/>
        </authorList>
    </citation>
    <scope>SUMOYLATION [LARGE SCALE ANALYSIS] AT LYS-574</scope>
    <scope>IDENTIFICATION BY MASS SPECTROMETRY [LARGE SCALE ANALYSIS]</scope>
</reference>
<reference key="29">
    <citation type="journal article" date="2013" name="Nat. Genet.">
        <title>Germline mutations affecting the proofreading domains of POLE and POLD1 predispose to colorectal adenomas and carcinomas.</title>
        <authorList>
            <consortium name="CORGI Consortium"/>
            <consortium name="WGS500 Consortium"/>
            <person name="Palles C."/>
            <person name="Cazier J.B."/>
            <person name="Howarth K.M."/>
            <person name="Domingo E."/>
            <person name="Jones A.M."/>
            <person name="Broderick P."/>
            <person name="Kemp Z."/>
            <person name="Spain S.L."/>
            <person name="Guarino Almeida E."/>
            <person name="Salguero I."/>
            <person name="Sherborne A."/>
            <person name="Chubb D."/>
            <person name="Carvajal-Carmona L.G."/>
            <person name="Ma Y."/>
            <person name="Kaur K."/>
            <person name="Dobbins S."/>
            <person name="Barclay E."/>
            <person name="Gorman M."/>
            <person name="Martin L."/>
            <person name="Kovac M.B."/>
            <person name="Humphray S."/>
            <person name="Lucassen A."/>
            <person name="Holmes C.C."/>
            <person name="Bentley D."/>
            <person name="Donnelly P."/>
            <person name="Taylor J."/>
            <person name="Petridis C."/>
            <person name="Roylance R."/>
            <person name="Sawyer E.J."/>
            <person name="Kerr D.J."/>
            <person name="Clark S."/>
            <person name="Grimes J."/>
            <person name="Kearsey S.E."/>
            <person name="Thomas H.J."/>
            <person name="McVean G."/>
            <person name="Houlston R.S."/>
            <person name="Tomlinson I."/>
        </authorList>
    </citation>
    <scope>VARIANTS ASP-145; HIS-461; ASN-478; LEU-787; HIS-808 AND THR-864</scope>
    <scope>INVOLVEMENT IN CRCS10</scope>
</reference>
<reference key="30">
    <citation type="journal article" date="2014" name="Hum. Mol. Genet.">
        <title>New insights into POLE and POLD1 germline mutations in familial colorectal cancer and polyposis.</title>
        <authorList>
            <person name="Valle L."/>
            <person name="Hernandez-Illan E."/>
            <person name="Bellido F."/>
            <person name="Aiza G."/>
            <person name="Castillejo A."/>
            <person name="Castillejo M.I."/>
            <person name="Navarro M."/>
            <person name="Segui N."/>
            <person name="Vargas G."/>
            <person name="Guarinos C."/>
            <person name="Juarez M."/>
            <person name="Sanjuan X."/>
            <person name="Iglesias S."/>
            <person name="Alenda C."/>
            <person name="Egoavil C."/>
            <person name="Segura A."/>
            <person name="Juan M.J."/>
            <person name="Rodriguez-Soler M."/>
            <person name="Brunet J."/>
            <person name="Gonzalez S."/>
            <person name="Jover R."/>
            <person name="Lazaro C."/>
            <person name="Capella G."/>
            <person name="Pineda M."/>
            <person name="Soto J.L."/>
            <person name="Blanco I."/>
        </authorList>
    </citation>
    <scope>VARIANT CRCS10 PRO-474</scope>
</reference>
<reference key="31">
    <citation type="journal article" date="2019" name="J. Clin. Invest.">
        <title>Polymerase delta deficiency causes syndromic immunodeficiency with replicative stress.</title>
        <authorList>
            <person name="Conde C.D."/>
            <person name="Petronczki O.Y."/>
            <person name="Baris S."/>
            <person name="Willmann K.L."/>
            <person name="Girardi E."/>
            <person name="Salzer E."/>
            <person name="Weitzer S."/>
            <person name="Ardy R.C."/>
            <person name="Krolo A."/>
            <person name="Ijspeert H."/>
            <person name="Kiykim A."/>
            <person name="Karakoc-Aydiner E."/>
            <person name="Foerster-Waldl E."/>
            <person name="Kager L."/>
            <person name="Pickl W.F."/>
            <person name="Superti-Furga G."/>
            <person name="Martinez J."/>
            <person name="Loizou J.I."/>
            <person name="Ozen A."/>
            <person name="van der Burg M."/>
            <person name="Boztug K."/>
        </authorList>
    </citation>
    <scope>INVOLVEMENT IN IMD120</scope>
    <scope>VARIANTS IMD120 HIS-684; TRP-939 AND TRP-1074</scope>
    <scope>CHARACTERIZATION OF VARIANTS IMD120 HIS-684; TRP-939 AND TRP-1074</scope>
    <scope>FUNCTION</scope>
    <scope>INTERACTION WITH POLD2 AND POLD3</scope>
    <scope>MUTAGENESIS OF ASP-602 AND ASP-757</scope>
</reference>
<reference key="32">
    <citation type="journal article" date="2020" name="J. Allergy Clin. Immunol.">
        <title>Combined immunodeficiency caused by a loss-of-function mutation in DNA polymerase delta 1.</title>
        <authorList>
            <person name="Cui Y."/>
            <person name="Keles S."/>
            <person name="Charbonnier L.M."/>
            <person name="Jule A.M."/>
            <person name="Henderson L."/>
            <person name="Celik S.C."/>
            <person name="Reisli I."/>
            <person name="Shen C."/>
            <person name="Xie W.J."/>
            <person name="Schmitz-Abe K."/>
            <person name="Wu H."/>
            <person name="Chatila T.A."/>
        </authorList>
    </citation>
    <scope>INVOLVEMENT IN IMD120</scope>
    <scope>VARIANT IMD120 CYS-1060</scope>
    <scope>CHARACTERIZATION OF VARIANT IMD120 CYS-1060</scope>
    <scope>INTERACTION WITH POLD2 AND RFC1</scope>
</reference>
<accession>P28340</accession>
<accession>Q8NER3</accession>
<accession>Q96H98</accession>
<comment type="function">
    <text evidence="12 15 16 17 22 23 24 25 28">As the catalytic component of the trimeric (Pol-delta3 complex) and tetrameric DNA polymerase delta complexes (Pol-delta4 complex), plays a crucial role in high fidelity genome replication, including in lagging strand synthesis, and repair (PubMed:16510448, PubMed:19074196, PubMed:20334433, PubMed:24022480, PubMed:24035200, PubMed:31449058). Exhibits both DNA polymerase and 3'- to 5'-exonuclease activities (PubMed:16510448, PubMed:19074196, PubMed:20334433, PubMed:24022480, PubMed:24035200). Requires the presence of accessory proteins POLD2, POLD3 and POLD4 for full activity. Depending upon the absence (Pol-delta3) or the presence of POLD4 (Pol-delta4), displays differences in catalytic activity. Most notably, expresses higher proofreading activity in the context of Pol-delta3 compared with that of Pol-delta4 (PubMed:19074196, PubMed:20334433). Although both Pol-delta3 and Pol-delta4 process Okazaki fragments in vitro, Pol-delta3 may be better suited to fulfill this task, exhibiting near-absence of strand displacement activity compared to Pol-delta4 and stalling on encounter with the 5'-blocking oligonucleotides. Pol-delta3 idling process may avoid the formation of a gap, while maintaining a nick that can be readily ligated (PubMed:24035200). Along with DNA polymerase kappa, DNA polymerase delta carries out approximately half of nucleotide excision repair (NER) synthesis following UV irradiation (PubMed:20227374). Under conditions of DNA replication stress, in the presence of POLD3 and POLD4, may catalyze the repair of broken replication forks through break-induced replication (BIR) (PubMed:24310611). Involved in the translesion synthesis (TLS) of templates carrying O6-methylguanine, 8oxoG or abasic sites (PubMed:19074196, PubMed:24191025).</text>
</comment>
<comment type="catalytic activity">
    <reaction evidence="15 17">
        <text>DNA(n) + a 2'-deoxyribonucleoside 5'-triphosphate = DNA(n+1) + diphosphate</text>
        <dbReference type="Rhea" id="RHEA:22508"/>
        <dbReference type="Rhea" id="RHEA-COMP:17339"/>
        <dbReference type="Rhea" id="RHEA-COMP:17340"/>
        <dbReference type="ChEBI" id="CHEBI:33019"/>
        <dbReference type="ChEBI" id="CHEBI:61560"/>
        <dbReference type="ChEBI" id="CHEBI:173112"/>
        <dbReference type="EC" id="2.7.7.7"/>
    </reaction>
</comment>
<comment type="cofactor">
    <cofactor evidence="1">
        <name>[4Fe-4S] cluster</name>
        <dbReference type="ChEBI" id="CHEBI:49883"/>
    </cofactor>
    <text evidence="1">Binds 1 [4Fe-4S] cluster.</text>
</comment>
<comment type="activity regulation">
    <text evidence="2 5 7 8 12 15 17 22 27">Regulated by alteration of quaternary structure. Exhibits burst rates of DNA synthesis are about 5 times faster in the presence of POLD4 (Pol-delta4 complex) than in its absence (Pol-delta3 complex), while the affinity of the enzyme for its DNA and dNTP substrates appears unchanged. The Pol-delta3 complex is more likely to proofread DNA synthesis because it cleaves single-stranded DNA twice as fast and transfers mismatched DNA from the polymerase to the exonuclease sites 9 times faster compared to the Pol-delta3 complex. Pol-delta3 also extends mismatched primers 3 times more slowly in the absence of POLD4. The conversion of Pol-delta4 into Pol-delta3 is induced by genotoxic stress or by replication stress leading POLD4 degradation (PubMed:19074196, PubMed:20334433). Stimulated in the presence of PCNA (PubMed:11328591, PubMed:12403614, PubMed:12522211, PubMed:16510448, PubMed:24022480, PubMed:24939902). This stimulation is further increased in the presence of KCTD13/PDIP1, most probably via direct interaction between KCTD13 and POLD2 (By similarity).</text>
</comment>
<comment type="biophysicochemical properties">
    <kinetics>
        <text>kcat is 87 sec(-1) for DNA synthesis by Pol-delta4 and 19 sec(-1) for Pol-delta3. kcat for exonuclease activity determined using a 26mer/40mer duplex DNA gives a value of 0.003 sec(-1) for Pol-delta4 and 0.026 sec(-1) for Pol-delta3. When using a 26mer/40mer with a T:G mismatch at the primer terminus, the switching rates from the polymerase to the exonuclease site for Pol-delta4 and Pol-delta3 are increased 20- and 10-fold, respectively, but the rate constant for Pol-delta3 is still 5-fold faster than that for Pol-delta4.</text>
    </kinetics>
</comment>
<comment type="subunit">
    <text evidence="5 6 7 8 11 12 14 15 17 18 21 22 24 27 28 29">Component of the tetrameric DNA polymerase delta complex (Pol-delta4), which consists of POLD1/p125, POLD2/p50, POLD3/p66/p68 and POLD4/p12, with POLD1 bearing both DNA polymerase and 3' to 5' proofreading exonuclease activities (PubMed:11595739, PubMed:12522211, PubMed:17317665, PubMed:22801543, PubMed:31449058, PubMed:31629014). Within Pol-delta4, directly interacts with POLD2 and POLD4 (PubMed:11328591, PubMed:12403614, PubMed:16510448). Following genotoxic stress by DNA-damaging agents, such as ultraviolet light and methyl methanesulfonate, or by replication stress induced by treatment with hydroxyurea or aphidicolin, Pol-delta4 is converted into a trimeric form of the complex (Pol-delta3) by POLD4 degradation. Pol-delta3 is the major form at S phase replication sites and DNA damage sites (PubMed:17317665, PubMed:22801543). POLD1 displays different catalytic properties depending upon the complex it is found in (PubMed:17317665). It exhibits higher proofreading activity and fidelity than Pol-delta4, making it particularly well suited to respond to DNA damage (PubMed:19074196, PubMed:20334433). Directly interacts with PCNA, as do POLD3 and POLD4; this interaction stimulates Pol-delta4 polymerase activity (PubMed:11328591, PubMed:12403614, PubMed:12522211, PubMed:16510448, PubMed:24022480, PubMed:24939902). As POLD2 and POLD4, directly interacts with WRNIP1; this interaction stimulates DNA polymerase delta-mediated DNA synthesis, independently of the presence of PCNA. This stimulation may be due predominantly to an increase of initiation frequency and also to increased processivity (PubMed:15670210). Also observed as a dimeric complex with POLD2 (Pol-delta2 complex). Pol-delta2 is relatively insensitive to the PCNA stimulation (2-5-fold) compared to Pol-delta4 that is stimulated by over 50-fold (PubMed:12403614). The DNA polymerase delta complex interacts with POLDIP2; this interaction is probably mediated through direct binding to POLD2 (PubMed:12522211). Interacts with CIAO1 (PubMed:23891004). Interacts with POLDIP2 (PubMed:24191025). Interacts with RFC1 (PubMed:31629014).</text>
</comment>
<comment type="interaction">
    <interactant intactId="EBI-716569">
        <id>P28340</id>
    </interactant>
    <interactant intactId="EBI-10173507">
        <id>Q6UY14-3</id>
        <label>ADAMTSL4</label>
    </interactant>
    <organismsDiffer>false</organismsDiffer>
    <experiments>3</experiments>
</comment>
<comment type="interaction">
    <interactant intactId="EBI-716569">
        <id>P28340</id>
    </interactant>
    <interactant intactId="EBI-3867333">
        <id>A8MQ03</id>
        <label>CYSRT1</label>
    </interactant>
    <organismsDiffer>false</organismsDiffer>
    <experiments>3</experiments>
</comment>
<comment type="interaction">
    <interactant intactId="EBI-716569">
        <id>P28340</id>
    </interactant>
    <interactant intactId="EBI-740929">
        <id>Q53G59</id>
        <label>KLHL12</label>
    </interactant>
    <organismsDiffer>false</organismsDiffer>
    <experiments>3</experiments>
</comment>
<comment type="interaction">
    <interactant intactId="EBI-716569">
        <id>P28340</id>
    </interactant>
    <interactant intactId="EBI-9088686">
        <id>Q14847-2</id>
        <label>LASP1</label>
    </interactant>
    <organismsDiffer>false</organismsDiffer>
    <experiments>3</experiments>
</comment>
<comment type="interaction">
    <interactant intactId="EBI-716569">
        <id>P28340</id>
    </interactant>
    <interactant intactId="EBI-358311">
        <id>P12004</id>
        <label>PCNA</label>
    </interactant>
    <organismsDiffer>false</organismsDiffer>
    <experiments>3</experiments>
</comment>
<comment type="interaction">
    <interactant intactId="EBI-716569">
        <id>P28340</id>
    </interactant>
    <interactant intactId="EBI-372354">
        <id>P49005</id>
        <label>POLD2</label>
    </interactant>
    <organismsDiffer>false</organismsDiffer>
    <experiments>16</experiments>
</comment>
<comment type="interaction">
    <interactant intactId="EBI-716569">
        <id>P28340</id>
    </interactant>
    <interactant intactId="EBI-864968">
        <id>Q9HCU8</id>
        <label>POLD4</label>
    </interactant>
    <organismsDiffer>false</organismsDiffer>
    <experiments>14</experiments>
</comment>
<comment type="interaction">
    <interactant intactId="EBI-716569">
        <id>P28340</id>
    </interactant>
    <interactant intactId="EBI-750109">
        <id>Q9NYB0</id>
        <label>TERF2IP</label>
    </interactant>
    <organismsDiffer>false</organismsDiffer>
    <experiments>2</experiments>
</comment>
<comment type="interaction">
    <interactant intactId="EBI-716569">
        <id>P28340</id>
    </interactant>
    <interactant intactId="EBI-2513471">
        <id>Q96S55</id>
        <label>WRNIP1</label>
    </interactant>
    <organismsDiffer>false</organismsDiffer>
    <experiments>2</experiments>
</comment>
<comment type="subcellular location">
    <subcellularLocation>
        <location evidence="6 16 18">Nucleus</location>
    </subcellularLocation>
    <text evidence="6 16 18">Colocalizes with PCNA and POLD3 at S phase replication sites (PubMed:11595739). After UV irradiation, recruited to DNA damage sites within 2 hours, independently on the cell cycle phase, nor on PCNA ubiquitination. This recruitment requires POLD3, PCNA and RFC1-replication factor C complex (PubMed:20227374, PubMed:22801543).</text>
</comment>
<comment type="tissue specificity">
    <text evidence="20">Widely expressed, with high levels of expression in heart and lung.</text>
</comment>
<comment type="developmental stage">
    <text evidence="18">Expression is cell cycle-dependent, with highest levels in G2/M phase and lowest in G1.</text>
</comment>
<comment type="induction">
    <text evidence="9">Up-regulated by serum stimulation.</text>
</comment>
<comment type="domain">
    <text evidence="1">The CysB motif binds 1 4Fe-4S cluster and is required for the formation of polymerase complexes.</text>
</comment>
<comment type="disease" evidence="19 26">
    <disease id="DI-03661">
        <name>Colorectal cancer 10</name>
        <acronym>CRCS10</acronym>
        <description>A complex disease characterized by malignant lesions arising from the inner wall of the large intestine (the colon) and the rectum. Genetic alterations are often associated with progression from premalignant lesion (adenoma) to invasive adenocarcinoma. Risk factors for cancer of the colon and rectum include colon polyps, long-standing ulcerative colitis, and genetic family history.</description>
        <dbReference type="MIM" id="612591"/>
    </disease>
    <text>Disease susceptibility is associated with variants affecting the gene represented in this entry.</text>
</comment>
<comment type="disease" evidence="20">
    <disease id="DI-03863">
        <name>Mandibular hypoplasia, deafness, progeroid features, and lipodystrophy syndrome</name>
        <acronym>MDPL</acronym>
        <description>An autosomal dominant systemic disorder characterized by prominent loss of subcutaneous fat, metabolic abnormalities including insulin resistance and diabetes mellitus, sclerodermatous skin, and a facial appearance characterized by mandibular hypoplasia. Sensorineural deafness occurs late in the first or second decades of life.</description>
        <dbReference type="MIM" id="615381"/>
    </disease>
    <text>The disease is caused by variants affecting the gene represented in this entry.</text>
</comment>
<comment type="disease" evidence="28 29">
    <disease id="DI-06904">
        <name>Immunodeficiency 120</name>
        <acronym>IMD120</acronym>
        <description>An autosomal recessive immunologic disorder manifesting in early childhood with recurrent upper and lower respiratory tract infections, lymphopenia, and hypogammaglobulinemia. Affected individuals may also develop persistent viral infections, particularly of the herpes family. Additional variable features include hearing loss, speech delay, short stature, and mildly impaired intellectual development.</description>
        <dbReference type="MIM" id="620836"/>
    </disease>
    <text>The disease is caused by variants affecting the gene represented in this entry.</text>
</comment>
<comment type="similarity">
    <text evidence="31">Belongs to the DNA polymerase type-B family.</text>
</comment>
<dbReference type="EC" id="2.7.7.7" evidence="15 17"/>
<dbReference type="EC" id="3.1.11.-" evidence="12 15 17"/>
<dbReference type="EMBL" id="M80397">
    <property type="protein sequence ID" value="AAA58439.1"/>
    <property type="molecule type" value="mRNA"/>
</dbReference>
<dbReference type="EMBL" id="M81735">
    <property type="protein sequence ID" value="AAA35768.1"/>
    <property type="molecule type" value="mRNA"/>
</dbReference>
<dbReference type="EMBL" id="AY129569">
    <property type="protein sequence ID" value="AAM76971.1"/>
    <property type="molecule type" value="Genomic_DNA"/>
</dbReference>
<dbReference type="EMBL" id="BC008800">
    <property type="protein sequence ID" value="AAH08800.1"/>
    <property type="molecule type" value="mRNA"/>
</dbReference>
<dbReference type="CCDS" id="CCDS12795.1"/>
<dbReference type="PIR" id="A41618">
    <property type="entry name" value="A41618"/>
</dbReference>
<dbReference type="RefSeq" id="NP_001243778.1">
    <property type="nucleotide sequence ID" value="NM_001256849.1"/>
</dbReference>
<dbReference type="RefSeq" id="NP_002682.2">
    <property type="nucleotide sequence ID" value="NM_002691.4"/>
</dbReference>
<dbReference type="RefSeq" id="XP_011525340.1">
    <property type="nucleotide sequence ID" value="XM_011527038.2"/>
</dbReference>
<dbReference type="RefSeq" id="XP_016882370.1">
    <property type="nucleotide sequence ID" value="XM_017026881.1"/>
</dbReference>
<dbReference type="RefSeq" id="XP_047294902.1">
    <property type="nucleotide sequence ID" value="XM_047438946.1"/>
</dbReference>
<dbReference type="RefSeq" id="XP_047294903.1">
    <property type="nucleotide sequence ID" value="XM_047438947.1"/>
</dbReference>
<dbReference type="RefSeq" id="XP_054177207.1">
    <property type="nucleotide sequence ID" value="XM_054321232.1"/>
</dbReference>
<dbReference type="RefSeq" id="XP_054177208.1">
    <property type="nucleotide sequence ID" value="XM_054321233.1"/>
</dbReference>
<dbReference type="RefSeq" id="XP_054177209.1">
    <property type="nucleotide sequence ID" value="XM_054321234.1"/>
</dbReference>
<dbReference type="PDB" id="6S1M">
    <property type="method" value="EM"/>
    <property type="resolution" value="4.27 A"/>
    <property type="chains" value="A=1-1107"/>
</dbReference>
<dbReference type="PDB" id="6S1N">
    <property type="method" value="EM"/>
    <property type="resolution" value="4.86 A"/>
    <property type="chains" value="A=1-1107"/>
</dbReference>
<dbReference type="PDB" id="6S1O">
    <property type="method" value="EM"/>
    <property type="resolution" value="8.10 A"/>
    <property type="chains" value="A=1-1107"/>
</dbReference>
<dbReference type="PDB" id="6TNY">
    <property type="method" value="EM"/>
    <property type="resolution" value="3.08 A"/>
    <property type="chains" value="A=1-1107"/>
</dbReference>
<dbReference type="PDB" id="6TNZ">
    <property type="method" value="EM"/>
    <property type="resolution" value="4.05 A"/>
    <property type="chains" value="A=1-1107"/>
</dbReference>
<dbReference type="PDB" id="9EKB">
    <property type="method" value="EM"/>
    <property type="resolution" value="3.65 A"/>
    <property type="chains" value="A=1-1107"/>
</dbReference>
<dbReference type="PDBsum" id="6S1M"/>
<dbReference type="PDBsum" id="6S1N"/>
<dbReference type="PDBsum" id="6S1O"/>
<dbReference type="PDBsum" id="6TNY"/>
<dbReference type="PDBsum" id="6TNZ"/>
<dbReference type="PDBsum" id="9EKB"/>
<dbReference type="EMDB" id="EMD-10080"/>
<dbReference type="EMDB" id="EMD-10081"/>
<dbReference type="EMDB" id="EMD-10082"/>
<dbReference type="EMDB" id="EMD-10539"/>
<dbReference type="EMDB" id="EMD-10540"/>
<dbReference type="EMDB" id="EMD-48117"/>
<dbReference type="SMR" id="P28340"/>
<dbReference type="BioGRID" id="111420">
    <property type="interactions" value="361"/>
</dbReference>
<dbReference type="ComplexPortal" id="CPX-2097">
    <property type="entry name" value="DNA polymerase delta complex"/>
</dbReference>
<dbReference type="CORUM" id="P28340"/>
<dbReference type="FunCoup" id="P28340">
    <property type="interactions" value="2398"/>
</dbReference>
<dbReference type="IntAct" id="P28340">
    <property type="interactions" value="100"/>
</dbReference>
<dbReference type="MINT" id="P28340"/>
<dbReference type="STRING" id="9606.ENSP00000472445"/>
<dbReference type="BindingDB" id="P28340"/>
<dbReference type="ChEMBL" id="CHEMBL2735"/>
<dbReference type="DrugBank" id="DB12151">
    <property type="generic name" value="Brincidofovir"/>
</dbReference>
<dbReference type="DrugCentral" id="P28340"/>
<dbReference type="GlyGen" id="P28340">
    <property type="glycosylation" value="2 sites, 1 O-linked glycan (1 site)"/>
</dbReference>
<dbReference type="iPTMnet" id="P28340"/>
<dbReference type="PhosphoSitePlus" id="P28340"/>
<dbReference type="BioMuta" id="POLD1"/>
<dbReference type="DMDM" id="50403732"/>
<dbReference type="jPOST" id="P28340"/>
<dbReference type="MassIVE" id="P28340"/>
<dbReference type="PaxDb" id="9606-ENSP00000406046"/>
<dbReference type="PeptideAtlas" id="P28340"/>
<dbReference type="ProteomicsDB" id="54478"/>
<dbReference type="Pumba" id="P28340"/>
<dbReference type="Antibodypedia" id="3821">
    <property type="antibodies" value="353 antibodies from 37 providers"/>
</dbReference>
<dbReference type="CPTC" id="P28340">
    <property type="antibodies" value="1 antibody"/>
</dbReference>
<dbReference type="DNASU" id="5424"/>
<dbReference type="Ensembl" id="ENST00000440232.7">
    <property type="protein sequence ID" value="ENSP00000406046.1"/>
    <property type="gene ID" value="ENSG00000062822.16"/>
</dbReference>
<dbReference type="Ensembl" id="ENST00000593887.2">
    <property type="protein sequence ID" value="ENSP00000472607.2"/>
    <property type="gene ID" value="ENSG00000062822.16"/>
</dbReference>
<dbReference type="Ensembl" id="ENST00000599857.7">
    <property type="protein sequence ID" value="ENSP00000473052.1"/>
    <property type="gene ID" value="ENSG00000062822.16"/>
</dbReference>
<dbReference type="Ensembl" id="ENST00000601098.6">
    <property type="protein sequence ID" value="ENSP00000472600.2"/>
    <property type="gene ID" value="ENSG00000062822.16"/>
</dbReference>
<dbReference type="Ensembl" id="ENST00000687454.1">
    <property type="protein sequence ID" value="ENSP00000510052.1"/>
    <property type="gene ID" value="ENSG00000062822.16"/>
</dbReference>
<dbReference type="GeneID" id="5424"/>
<dbReference type="KEGG" id="hsa:5424"/>
<dbReference type="MANE-Select" id="ENST00000440232.7">
    <property type="protein sequence ID" value="ENSP00000406046.1"/>
    <property type="RefSeq nucleotide sequence ID" value="NM_002691.4"/>
    <property type="RefSeq protein sequence ID" value="NP_002682.2"/>
</dbReference>
<dbReference type="UCSC" id="uc002psb.6">
    <property type="organism name" value="human"/>
</dbReference>
<dbReference type="AGR" id="HGNC:9175"/>
<dbReference type="CTD" id="5424"/>
<dbReference type="DisGeNET" id="5424"/>
<dbReference type="GeneCards" id="POLD1"/>
<dbReference type="HGNC" id="HGNC:9175">
    <property type="gene designation" value="POLD1"/>
</dbReference>
<dbReference type="HPA" id="ENSG00000062822">
    <property type="expression patterns" value="Low tissue specificity"/>
</dbReference>
<dbReference type="MalaCards" id="POLD1"/>
<dbReference type="MIM" id="174761">
    <property type="type" value="gene"/>
</dbReference>
<dbReference type="MIM" id="612591">
    <property type="type" value="phenotype"/>
</dbReference>
<dbReference type="MIM" id="615381">
    <property type="type" value="phenotype"/>
</dbReference>
<dbReference type="MIM" id="620836">
    <property type="type" value="phenotype"/>
</dbReference>
<dbReference type="neXtProt" id="NX_P28340"/>
<dbReference type="OpenTargets" id="ENSG00000062822"/>
<dbReference type="Orphanet" id="440437">
    <property type="disease" value="Familial colorectal cancer Type X"/>
</dbReference>
<dbReference type="Orphanet" id="363649">
    <property type="disease" value="Mandibular hypoplasia-deafness-progeroid features-lipodystrophy syndrome"/>
</dbReference>
<dbReference type="Orphanet" id="447877">
    <property type="disease" value="Polymerase proofreading-related adenomatous polyposis"/>
</dbReference>
<dbReference type="PharmGKB" id="PA33496"/>
<dbReference type="VEuPathDB" id="HostDB:ENSG00000062822"/>
<dbReference type="eggNOG" id="KOG0969">
    <property type="taxonomic scope" value="Eukaryota"/>
</dbReference>
<dbReference type="GeneTree" id="ENSGT00560000077365"/>
<dbReference type="HOGENOM" id="CLU_000203_2_0_1"/>
<dbReference type="InParanoid" id="P28340"/>
<dbReference type="OrthoDB" id="2414538at2759"/>
<dbReference type="PAN-GO" id="P28340">
    <property type="GO annotations" value="7 GO annotations based on evolutionary models"/>
</dbReference>
<dbReference type="PhylomeDB" id="P28340"/>
<dbReference type="TreeFam" id="TF352785"/>
<dbReference type="BRENDA" id="2.7.7.7">
    <property type="organism ID" value="2681"/>
</dbReference>
<dbReference type="PathwayCommons" id="P28340"/>
<dbReference type="Reactome" id="R-HSA-110314">
    <property type="pathway name" value="Recognition of DNA damage by PCNA-containing replication complex"/>
</dbReference>
<dbReference type="Reactome" id="R-HSA-174411">
    <property type="pathway name" value="Polymerase switching on the C-strand of the telomere"/>
</dbReference>
<dbReference type="Reactome" id="R-HSA-174414">
    <property type="pathway name" value="Processive synthesis on the C-strand of the telomere"/>
</dbReference>
<dbReference type="Reactome" id="R-HSA-174417">
    <property type="pathway name" value="Telomere C-strand (Lagging Strand) Synthesis"/>
</dbReference>
<dbReference type="Reactome" id="R-HSA-174437">
    <property type="pathway name" value="Removal of the Flap Intermediate from the C-strand"/>
</dbReference>
<dbReference type="Reactome" id="R-HSA-2564830">
    <property type="pathway name" value="Cytosolic iron-sulfur cluster assembly"/>
</dbReference>
<dbReference type="Reactome" id="R-HSA-5358565">
    <property type="pathway name" value="Mismatch repair (MMR) directed by MSH2:MSH6 (MutSalpha)"/>
</dbReference>
<dbReference type="Reactome" id="R-HSA-5358606">
    <property type="pathway name" value="Mismatch repair (MMR) directed by MSH2:MSH3 (MutSbeta)"/>
</dbReference>
<dbReference type="Reactome" id="R-HSA-5651801">
    <property type="pathway name" value="PCNA-Dependent Long Patch Base Excision Repair"/>
</dbReference>
<dbReference type="Reactome" id="R-HSA-5656169">
    <property type="pathway name" value="Termination of translesion DNA synthesis"/>
</dbReference>
<dbReference type="Reactome" id="R-HSA-5685942">
    <property type="pathway name" value="HDR through Homologous Recombination (HRR)"/>
</dbReference>
<dbReference type="Reactome" id="R-HSA-5696397">
    <property type="pathway name" value="Gap-filling DNA repair synthesis and ligation in GG-NER"/>
</dbReference>
<dbReference type="Reactome" id="R-HSA-5696400">
    <property type="pathway name" value="Dual Incision in GG-NER"/>
</dbReference>
<dbReference type="Reactome" id="R-HSA-6782135">
    <property type="pathway name" value="Dual incision in TC-NER"/>
</dbReference>
<dbReference type="Reactome" id="R-HSA-6782210">
    <property type="pathway name" value="Gap-filling DNA repair synthesis and ligation in TC-NER"/>
</dbReference>
<dbReference type="Reactome" id="R-HSA-69091">
    <property type="pathway name" value="Polymerase switching"/>
</dbReference>
<dbReference type="Reactome" id="R-HSA-69166">
    <property type="pathway name" value="Removal of the Flap Intermediate"/>
</dbReference>
<dbReference type="Reactome" id="R-HSA-69183">
    <property type="pathway name" value="Processive synthesis on the lagging strand"/>
</dbReference>
<dbReference type="SignaLink" id="P28340"/>
<dbReference type="SIGNOR" id="P28340"/>
<dbReference type="BioGRID-ORCS" id="5424">
    <property type="hits" value="795 hits in 1163 CRISPR screens"/>
</dbReference>
<dbReference type="ChiTaRS" id="POLD1">
    <property type="organism name" value="human"/>
</dbReference>
<dbReference type="GeneWiki" id="POLD1"/>
<dbReference type="GenomeRNAi" id="5424"/>
<dbReference type="Pharos" id="P28340">
    <property type="development level" value="Tclin"/>
</dbReference>
<dbReference type="PRO" id="PR:P28340"/>
<dbReference type="Proteomes" id="UP000005640">
    <property type="component" value="Chromosome 19"/>
</dbReference>
<dbReference type="RNAct" id="P28340">
    <property type="molecule type" value="protein"/>
</dbReference>
<dbReference type="Bgee" id="ENSG00000062822">
    <property type="expression patterns" value="Expressed in mucosa of transverse colon and 96 other cell types or tissues"/>
</dbReference>
<dbReference type="ExpressionAtlas" id="P28340">
    <property type="expression patterns" value="baseline and differential"/>
</dbReference>
<dbReference type="GO" id="GO:0016235">
    <property type="term" value="C:aggresome"/>
    <property type="evidence" value="ECO:0000314"/>
    <property type="project" value="HPA"/>
</dbReference>
<dbReference type="GO" id="GO:0005829">
    <property type="term" value="C:cytosol"/>
    <property type="evidence" value="ECO:0000314"/>
    <property type="project" value="HPA"/>
</dbReference>
<dbReference type="GO" id="GO:0043625">
    <property type="term" value="C:delta DNA polymerase complex"/>
    <property type="evidence" value="ECO:0000314"/>
    <property type="project" value="UniProtKB"/>
</dbReference>
<dbReference type="GO" id="GO:0016020">
    <property type="term" value="C:membrane"/>
    <property type="evidence" value="ECO:0007005"/>
    <property type="project" value="UniProtKB"/>
</dbReference>
<dbReference type="GO" id="GO:0005654">
    <property type="term" value="C:nucleoplasm"/>
    <property type="evidence" value="ECO:0000314"/>
    <property type="project" value="HPA"/>
</dbReference>
<dbReference type="GO" id="GO:0000109">
    <property type="term" value="C:nucleotide-excision repair complex"/>
    <property type="evidence" value="ECO:0000314"/>
    <property type="project" value="UniProtKB"/>
</dbReference>
<dbReference type="GO" id="GO:0005634">
    <property type="term" value="C:nucleus"/>
    <property type="evidence" value="ECO:0000314"/>
    <property type="project" value="UniProtKB"/>
</dbReference>
<dbReference type="GO" id="GO:0008296">
    <property type="term" value="F:3'-5'-DNA exonuclease activity"/>
    <property type="evidence" value="ECO:0000318"/>
    <property type="project" value="GO_Central"/>
</dbReference>
<dbReference type="GO" id="GO:0051539">
    <property type="term" value="F:4 iron, 4 sulfur cluster binding"/>
    <property type="evidence" value="ECO:0007669"/>
    <property type="project" value="UniProtKB-KW"/>
</dbReference>
<dbReference type="GO" id="GO:0003682">
    <property type="term" value="F:chromatin binding"/>
    <property type="evidence" value="ECO:0000314"/>
    <property type="project" value="UniProtKB"/>
</dbReference>
<dbReference type="GO" id="GO:0003684">
    <property type="term" value="F:damaged DNA binding"/>
    <property type="evidence" value="ECO:0000314"/>
    <property type="project" value="UniProtKB"/>
</dbReference>
<dbReference type="GO" id="GO:0003677">
    <property type="term" value="F:DNA binding"/>
    <property type="evidence" value="ECO:0000314"/>
    <property type="project" value="UniProtKB"/>
</dbReference>
<dbReference type="GO" id="GO:0003887">
    <property type="term" value="F:DNA-directed DNA polymerase activity"/>
    <property type="evidence" value="ECO:0000315"/>
    <property type="project" value="UniProtKB"/>
</dbReference>
<dbReference type="GO" id="GO:0019899">
    <property type="term" value="F:enzyme binding"/>
    <property type="evidence" value="ECO:0007669"/>
    <property type="project" value="Ensembl"/>
</dbReference>
<dbReference type="GO" id="GO:0000166">
    <property type="term" value="F:nucleotide binding"/>
    <property type="evidence" value="ECO:0007669"/>
    <property type="project" value="InterPro"/>
</dbReference>
<dbReference type="GO" id="GO:0008270">
    <property type="term" value="F:zinc ion binding"/>
    <property type="evidence" value="ECO:0007669"/>
    <property type="project" value="UniProtKB-KW"/>
</dbReference>
<dbReference type="GO" id="GO:0006287">
    <property type="term" value="P:base-excision repair, gap-filling"/>
    <property type="evidence" value="ECO:0000314"/>
    <property type="project" value="UniProtKB"/>
</dbReference>
<dbReference type="GO" id="GO:0034644">
    <property type="term" value="P:cellular response to UV"/>
    <property type="evidence" value="ECO:0000314"/>
    <property type="project" value="UniProtKB"/>
</dbReference>
<dbReference type="GO" id="GO:0071897">
    <property type="term" value="P:DNA biosynthetic process"/>
    <property type="evidence" value="ECO:0000314"/>
    <property type="project" value="UniProtKB"/>
</dbReference>
<dbReference type="GO" id="GO:0006281">
    <property type="term" value="P:DNA repair"/>
    <property type="evidence" value="ECO:0000304"/>
    <property type="project" value="ProtInc"/>
</dbReference>
<dbReference type="GO" id="GO:0006260">
    <property type="term" value="P:DNA replication"/>
    <property type="evidence" value="ECO:0000315"/>
    <property type="project" value="UniProtKB"/>
</dbReference>
<dbReference type="GO" id="GO:0045004">
    <property type="term" value="P:DNA replication proofreading"/>
    <property type="evidence" value="ECO:0000318"/>
    <property type="project" value="GO_Central"/>
</dbReference>
<dbReference type="GO" id="GO:0000731">
    <property type="term" value="P:DNA synthesis involved in DNA repair"/>
    <property type="evidence" value="ECO:0000314"/>
    <property type="project" value="UniProtKB"/>
</dbReference>
<dbReference type="GO" id="GO:0006261">
    <property type="term" value="P:DNA-templated DNA replication"/>
    <property type="evidence" value="ECO:0000314"/>
    <property type="project" value="ComplexPortal"/>
</dbReference>
<dbReference type="GO" id="GO:0070987">
    <property type="term" value="P:error-free translesion synthesis"/>
    <property type="evidence" value="ECO:0000314"/>
    <property type="project" value="UniProtKB"/>
</dbReference>
<dbReference type="GO" id="GO:0055089">
    <property type="term" value="P:fatty acid homeostasis"/>
    <property type="evidence" value="ECO:0000315"/>
    <property type="project" value="UniProtKB"/>
</dbReference>
<dbReference type="GO" id="GO:0006297">
    <property type="term" value="P:nucleotide-excision repair, DNA gap filling"/>
    <property type="evidence" value="ECO:0000315"/>
    <property type="project" value="UniProtKB"/>
</dbReference>
<dbReference type="GO" id="GO:0009411">
    <property type="term" value="P:response to UV"/>
    <property type="evidence" value="ECO:0000304"/>
    <property type="project" value="ProtInc"/>
</dbReference>
<dbReference type="CDD" id="cd05777">
    <property type="entry name" value="DNA_polB_delta_exo"/>
    <property type="match status" value="1"/>
</dbReference>
<dbReference type="CDD" id="cd05533">
    <property type="entry name" value="POLBc_delta"/>
    <property type="match status" value="1"/>
</dbReference>
<dbReference type="FunFam" id="1.10.132.60:FF:000001">
    <property type="entry name" value="DNA polymerase"/>
    <property type="match status" value="1"/>
</dbReference>
<dbReference type="FunFam" id="1.10.287.690:FF:000001">
    <property type="entry name" value="DNA polymerase"/>
    <property type="match status" value="1"/>
</dbReference>
<dbReference type="FunFam" id="3.30.342.10:FF:000003">
    <property type="entry name" value="DNA polymerase"/>
    <property type="match status" value="1"/>
</dbReference>
<dbReference type="FunFam" id="3.30.420.10:FF:000351">
    <property type="entry name" value="DNA polymerase"/>
    <property type="match status" value="1"/>
</dbReference>
<dbReference type="Gene3D" id="1.10.132.60">
    <property type="entry name" value="DNA polymerase family B, C-terminal domain"/>
    <property type="match status" value="1"/>
</dbReference>
<dbReference type="Gene3D" id="3.30.342.10">
    <property type="entry name" value="DNA Polymerase, chain B, domain 1"/>
    <property type="match status" value="1"/>
</dbReference>
<dbReference type="Gene3D" id="1.10.287.690">
    <property type="entry name" value="Helix hairpin bin"/>
    <property type="match status" value="1"/>
</dbReference>
<dbReference type="Gene3D" id="3.90.1600.10">
    <property type="entry name" value="Palm domain of DNA polymerase"/>
    <property type="match status" value="1"/>
</dbReference>
<dbReference type="Gene3D" id="3.30.420.10">
    <property type="entry name" value="Ribonuclease H-like superfamily/Ribonuclease H"/>
    <property type="match status" value="1"/>
</dbReference>
<dbReference type="InterPro" id="IPR006172">
    <property type="entry name" value="DNA-dir_DNA_pol_B"/>
</dbReference>
<dbReference type="InterPro" id="IPR017964">
    <property type="entry name" value="DNA-dir_DNA_pol_B_CS"/>
</dbReference>
<dbReference type="InterPro" id="IPR006133">
    <property type="entry name" value="DNA-dir_DNA_pol_B_exonuc"/>
</dbReference>
<dbReference type="InterPro" id="IPR006134">
    <property type="entry name" value="DNA-dir_DNA_pol_B_multi_dom"/>
</dbReference>
<dbReference type="InterPro" id="IPR043502">
    <property type="entry name" value="DNA/RNA_pol_sf"/>
</dbReference>
<dbReference type="InterPro" id="IPR042087">
    <property type="entry name" value="DNA_pol_B_thumb"/>
</dbReference>
<dbReference type="InterPro" id="IPR023211">
    <property type="entry name" value="DNA_pol_palm_dom_sf"/>
</dbReference>
<dbReference type="InterPro" id="IPR050240">
    <property type="entry name" value="DNA_pol_type-B"/>
</dbReference>
<dbReference type="InterPro" id="IPR056435">
    <property type="entry name" value="DPOD/Z_N"/>
</dbReference>
<dbReference type="InterPro" id="IPR012337">
    <property type="entry name" value="RNaseH-like_sf"/>
</dbReference>
<dbReference type="InterPro" id="IPR036397">
    <property type="entry name" value="RNaseH_sf"/>
</dbReference>
<dbReference type="InterPro" id="IPR025687">
    <property type="entry name" value="Znf-C4pol"/>
</dbReference>
<dbReference type="NCBIfam" id="TIGR00592">
    <property type="entry name" value="pol2"/>
    <property type="match status" value="1"/>
</dbReference>
<dbReference type="PANTHER" id="PTHR10322">
    <property type="entry name" value="DNA POLYMERASE CATALYTIC SUBUNIT"/>
    <property type="match status" value="1"/>
</dbReference>
<dbReference type="PANTHER" id="PTHR10322:SF23">
    <property type="entry name" value="DNA POLYMERASE DELTA CATALYTIC SUBUNIT"/>
    <property type="match status" value="1"/>
</dbReference>
<dbReference type="Pfam" id="PF00136">
    <property type="entry name" value="DNA_pol_B"/>
    <property type="match status" value="1"/>
</dbReference>
<dbReference type="Pfam" id="PF03104">
    <property type="entry name" value="DNA_pol_B_exo1"/>
    <property type="match status" value="1"/>
</dbReference>
<dbReference type="Pfam" id="PF24055">
    <property type="entry name" value="POL3_N"/>
    <property type="match status" value="1"/>
</dbReference>
<dbReference type="Pfam" id="PF14260">
    <property type="entry name" value="zf-C4pol"/>
    <property type="match status" value="1"/>
</dbReference>
<dbReference type="PRINTS" id="PR00106">
    <property type="entry name" value="DNAPOLB"/>
</dbReference>
<dbReference type="SMART" id="SM00486">
    <property type="entry name" value="POLBc"/>
    <property type="match status" value="1"/>
</dbReference>
<dbReference type="SUPFAM" id="SSF56672">
    <property type="entry name" value="DNA/RNA polymerases"/>
    <property type="match status" value="1"/>
</dbReference>
<dbReference type="SUPFAM" id="SSF53098">
    <property type="entry name" value="Ribonuclease H-like"/>
    <property type="match status" value="1"/>
</dbReference>
<dbReference type="PROSITE" id="PS00116">
    <property type="entry name" value="DNA_POLYMERASE_B"/>
    <property type="match status" value="1"/>
</dbReference>
<name>DPOD1_HUMAN</name>
<evidence type="ECO:0000250" key="1"/>
<evidence type="ECO:0000250" key="2">
    <source>
        <dbReference type="UniProtKB" id="P28339"/>
    </source>
</evidence>
<evidence type="ECO:0000255" key="3"/>
<evidence type="ECO:0000256" key="4">
    <source>
        <dbReference type="SAM" id="MobiDB-lite"/>
    </source>
</evidence>
<evidence type="ECO:0000269" key="5">
    <source>
    </source>
</evidence>
<evidence type="ECO:0000269" key="6">
    <source>
    </source>
</evidence>
<evidence type="ECO:0000269" key="7">
    <source>
    </source>
</evidence>
<evidence type="ECO:0000269" key="8">
    <source>
    </source>
</evidence>
<evidence type="ECO:0000269" key="9">
    <source>
    </source>
</evidence>
<evidence type="ECO:0000269" key="10">
    <source>
    </source>
</evidence>
<evidence type="ECO:0000269" key="11">
    <source>
    </source>
</evidence>
<evidence type="ECO:0000269" key="12">
    <source>
    </source>
</evidence>
<evidence type="ECO:0000269" key="13">
    <source>
    </source>
</evidence>
<evidence type="ECO:0000269" key="14">
    <source>
    </source>
</evidence>
<evidence type="ECO:0000269" key="15">
    <source>
    </source>
</evidence>
<evidence type="ECO:0000269" key="16">
    <source>
    </source>
</evidence>
<evidence type="ECO:0000269" key="17">
    <source>
    </source>
</evidence>
<evidence type="ECO:0000269" key="18">
    <source>
    </source>
</evidence>
<evidence type="ECO:0000269" key="19">
    <source>
    </source>
</evidence>
<evidence type="ECO:0000269" key="20">
    <source>
    </source>
</evidence>
<evidence type="ECO:0000269" key="21">
    <source>
    </source>
</evidence>
<evidence type="ECO:0000269" key="22">
    <source>
    </source>
</evidence>
<evidence type="ECO:0000269" key="23">
    <source>
    </source>
</evidence>
<evidence type="ECO:0000269" key="24">
    <source>
    </source>
</evidence>
<evidence type="ECO:0000269" key="25">
    <source>
    </source>
</evidence>
<evidence type="ECO:0000269" key="26">
    <source>
    </source>
</evidence>
<evidence type="ECO:0000269" key="27">
    <source>
    </source>
</evidence>
<evidence type="ECO:0000269" key="28">
    <source>
    </source>
</evidence>
<evidence type="ECO:0000269" key="29">
    <source>
    </source>
</evidence>
<evidence type="ECO:0000269" key="30">
    <source ref="3"/>
</evidence>
<evidence type="ECO:0000305" key="31"/>
<evidence type="ECO:0000312" key="32">
    <source>
        <dbReference type="HGNC" id="HGNC:9175"/>
    </source>
</evidence>
<evidence type="ECO:0007744" key="33">
    <source>
    </source>
</evidence>
<evidence type="ECO:0007744" key="34">
    <source>
    </source>
</evidence>
<evidence type="ECO:0007829" key="35">
    <source>
        <dbReference type="PDB" id="6TNY"/>
    </source>
</evidence>
<proteinExistence type="evidence at protein level"/>
<gene>
    <name evidence="32" type="primary">POLD1</name>
    <name type="synonym">POLD</name>
</gene>
<organism>
    <name type="scientific">Homo sapiens</name>
    <name type="common">Human</name>
    <dbReference type="NCBI Taxonomy" id="9606"/>
    <lineage>
        <taxon>Eukaryota</taxon>
        <taxon>Metazoa</taxon>
        <taxon>Chordata</taxon>
        <taxon>Craniata</taxon>
        <taxon>Vertebrata</taxon>
        <taxon>Euteleostomi</taxon>
        <taxon>Mammalia</taxon>
        <taxon>Eutheria</taxon>
        <taxon>Euarchontoglires</taxon>
        <taxon>Primates</taxon>
        <taxon>Haplorrhini</taxon>
        <taxon>Catarrhini</taxon>
        <taxon>Hominidae</taxon>
        <taxon>Homo</taxon>
    </lineage>
</organism>
<protein>
    <recommendedName>
        <fullName evidence="31">DNA polymerase delta catalytic subunit</fullName>
        <ecNumber evidence="15 17">2.7.7.7</ecNumber>
    </recommendedName>
    <alternativeName>
        <fullName evidence="31">3'-5' exodeoxyribonuclease</fullName>
        <ecNumber evidence="12 15 17">3.1.11.-</ecNumber>
    </alternativeName>
    <alternativeName>
        <fullName>DNA polymerase subunit delta p125</fullName>
    </alternativeName>
</protein>
<feature type="chain" id="PRO_0000046442" description="DNA polymerase delta catalytic subunit">
    <location>
        <begin position="1"/>
        <end position="1107"/>
    </location>
</feature>
<feature type="zinc finger region" description="CysA-type">
    <location>
        <begin position="1012"/>
        <end position="1029"/>
    </location>
</feature>
<feature type="region of interest" description="Disordered" evidence="4">
    <location>
        <begin position="1"/>
        <end position="34"/>
    </location>
</feature>
<feature type="short sequence motif" description="Nuclear localization signal" evidence="3">
    <location>
        <begin position="4"/>
        <end position="19"/>
    </location>
</feature>
<feature type="short sequence motif" description="CysB motif">
    <location>
        <begin position="1058"/>
        <end position="1076"/>
    </location>
</feature>
<feature type="binding site" evidence="1">
    <location>
        <position position="1012"/>
    </location>
    <ligand>
        <name>Zn(2+)</name>
        <dbReference type="ChEBI" id="CHEBI:29105"/>
    </ligand>
</feature>
<feature type="binding site" evidence="1">
    <location>
        <position position="1015"/>
    </location>
    <ligand>
        <name>Zn(2+)</name>
        <dbReference type="ChEBI" id="CHEBI:29105"/>
    </ligand>
</feature>
<feature type="binding site" evidence="1">
    <location>
        <position position="1026"/>
    </location>
    <ligand>
        <name>Zn(2+)</name>
        <dbReference type="ChEBI" id="CHEBI:29105"/>
    </ligand>
</feature>
<feature type="binding site" evidence="1">
    <location>
        <position position="1029"/>
    </location>
    <ligand>
        <name>Zn(2+)</name>
        <dbReference type="ChEBI" id="CHEBI:29105"/>
    </ligand>
</feature>
<feature type="binding site" evidence="1">
    <location>
        <position position="1058"/>
    </location>
    <ligand>
        <name>[4Fe-4S] cluster</name>
        <dbReference type="ChEBI" id="CHEBI:49883"/>
    </ligand>
</feature>
<feature type="binding site" evidence="1">
    <location>
        <position position="1061"/>
    </location>
    <ligand>
        <name>[4Fe-4S] cluster</name>
        <dbReference type="ChEBI" id="CHEBI:49883"/>
    </ligand>
</feature>
<feature type="binding site" evidence="1">
    <location>
        <position position="1071"/>
    </location>
    <ligand>
        <name>[4Fe-4S] cluster</name>
        <dbReference type="ChEBI" id="CHEBI:49883"/>
    </ligand>
</feature>
<feature type="binding site" evidence="1">
    <location>
        <position position="1076"/>
    </location>
    <ligand>
        <name>[4Fe-4S] cluster</name>
        <dbReference type="ChEBI" id="CHEBI:49883"/>
    </ligand>
</feature>
<feature type="modified residue" description="Omega-N-methylarginine" evidence="33">
    <location>
        <position position="19"/>
    </location>
</feature>
<feature type="cross-link" description="Glycyl lysine isopeptide (Lys-Gly) (interchain with G-Cter in SUMO2)" evidence="34">
    <location>
        <position position="574"/>
    </location>
</feature>
<feature type="sequence variant" id="VAR_048878" description="In dbSNP:rs9282830.">
    <original>R</original>
    <variation>W</variation>
    <location>
        <position position="5"/>
    </location>
</feature>
<feature type="sequence variant" id="VAR_019340" description="In dbSNP:rs3218773." evidence="30">
    <original>R</original>
    <variation>H</variation>
    <location>
        <position position="19"/>
    </location>
</feature>
<feature type="sequence variant" id="VAR_048879" description="In dbSNP:rs9282831.">
    <original>G</original>
    <variation>C</variation>
    <location>
        <position position="21"/>
    </location>
</feature>
<feature type="sequence variant" id="VAR_016146" description="In dbSNP:rs3218772." evidence="13 30">
    <original>R</original>
    <variation>W</variation>
    <location>
        <position position="30"/>
    </location>
</feature>
<feature type="sequence variant" id="VAR_019341" description="In dbSNP:rs1726801." evidence="9 10 30">
    <original>R</original>
    <variation>H</variation>
    <location>
        <position position="119"/>
    </location>
</feature>
<feature type="sequence variant" id="VAR_069333" description="Found in a colorectal sample; somatic mutation." evidence="19">
    <original>A</original>
    <variation>D</variation>
    <location>
        <position position="145"/>
    </location>
</feature>
<feature type="sequence variant" id="VAR_019342" description="In dbSNP:rs1726803." evidence="9 30">
    <original>S</original>
    <variation>N</variation>
    <location>
        <position position="173"/>
    </location>
</feature>
<feature type="sequence variant" id="VAR_019343" description="In dbSNP:rs3218750." evidence="30">
    <original>R</original>
    <variation>H</variation>
    <location>
        <position position="177"/>
    </location>
</feature>
<feature type="sequence variant" id="VAR_048880" description="In dbSNP:rs2230243.">
    <original>P</original>
    <variation>L</variation>
    <location>
        <position position="347"/>
    </location>
</feature>
<feature type="sequence variant" id="VAR_069334" description="Found in a colorectal sample; somatic mutation." evidence="19">
    <original>Q</original>
    <variation>H</variation>
    <location>
        <position position="461"/>
    </location>
</feature>
<feature type="sequence variant" id="VAR_071966" description="In CRCS10; dbSNP:rs587777627." evidence="26">
    <original>L</original>
    <variation>P</variation>
    <location>
        <position position="474"/>
    </location>
</feature>
<feature type="sequence variant" id="VAR_069335" description="Risk factor for CRCS10; dbSNP:rs397514632." evidence="19">
    <original>S</original>
    <variation>N</variation>
    <location>
        <position position="478"/>
    </location>
</feature>
<feature type="sequence variant" id="VAR_070231" description="In MDPL; the mutant enzyme lacks DNA polymerase ability; has decreased exonuclease activity; can bind DNA but is unable to interact with and incorporate dNTPs." evidence="20">
    <location>
        <position position="605"/>
    </location>
</feature>
<feature type="sequence variant" id="VAR_089633" description="In IMD120; uncertain significance; does not affect interaction with POLD2 and POLD3; does not affect protein stability when tested in a heterologous system; strongly decreased polymerase activity, when tested in transfected HEK293 cells in association with W-939." evidence="28">
    <original>Q</original>
    <variation>H</variation>
    <location>
        <position position="684"/>
    </location>
</feature>
<feature type="sequence variant" id="VAR_069336" description="Found in a colorectal sample; somatic mutation; dbSNP:rs199783227." evidence="19">
    <original>P</original>
    <variation>L</variation>
    <location>
        <position position="787"/>
    </location>
</feature>
<feature type="sequence variant" id="VAR_069337" description="Found in a colorectal sample; somatic mutation; dbSNP:rs771700024." evidence="19">
    <original>R</original>
    <variation>H</variation>
    <location>
        <position position="808"/>
    </location>
</feature>
<feature type="sequence variant" id="VAR_019344" description="In dbSNP:rs3218775." evidence="30">
    <original>R</original>
    <variation>H</variation>
    <location>
        <position position="849"/>
    </location>
</feature>
<feature type="sequence variant" id="VAR_069338" description="Found in a colorectal sample; somatic mutation; dbSNP:rs765437818." evidence="19">
    <original>A</original>
    <variation>T</variation>
    <location>
        <position position="864"/>
    </location>
</feature>
<feature type="sequence variant" id="VAR_089634" description="In IMD120; uncertain significance; does not affect interaction with POLD2 and POLD3; strongly decreased polymerase activity, when tested in transfected HEK293 cells in association with H-684." evidence="28">
    <original>S</original>
    <variation>W</variation>
    <location>
        <position position="939"/>
    </location>
</feature>
<feature type="sequence variant" id="VAR_089635" description="In IMD120; likely pathogenic; strongly reduced interaction with POLD2 and RFC1; leads to lower T cell proliferation following cell activation." evidence="29">
    <original>R</original>
    <variation>C</variation>
    <location>
        <position position="1060"/>
    </location>
</feature>
<feature type="sequence variant" id="VAR_089636" description="In IMD120; uncertain significance; decreased polymerase activity, when tested in transfected HEK293 cells; does not affect protein stability when tested in a heterologous system; does not affect interaction with POLD2 and POLD3." evidence="28">
    <original>R</original>
    <variation>W</variation>
    <location>
        <position position="1074"/>
    </location>
</feature>
<feature type="sequence variant" id="VAR_019345" description="In dbSNP:rs3219457." evidence="30">
    <original>R</original>
    <variation>Q</variation>
    <location>
        <position position="1086"/>
    </location>
</feature>
<feature type="mutagenesis site" description="Loss of exonuclease activity. No effect on DNA polymerase activity." evidence="15 17">
    <original>D</original>
    <variation>A</variation>
    <location>
        <position position="402"/>
    </location>
</feature>
<feature type="mutagenesis site" description="Loss of polymerase activity; when associated with A-757." evidence="28">
    <original>D</original>
    <variation>A</variation>
    <location>
        <position position="602"/>
    </location>
</feature>
<feature type="mutagenesis site" description="Loss of polymerase activity; when associated with A-602." evidence="28">
    <original>D</original>
    <variation>A</variation>
    <location>
        <position position="757"/>
    </location>
</feature>
<feature type="sequence conflict" description="In Ref. 1; AAA58439." evidence="31" ref="1">
    <original>Y</original>
    <variation>H</variation>
    <location>
        <position position="472"/>
    </location>
</feature>
<feature type="sequence conflict" description="In Ref. 2; AAA35768." evidence="31" ref="2">
    <original>R</original>
    <variation>G</variation>
    <location>
        <position position="776"/>
    </location>
</feature>
<feature type="turn" evidence="35">
    <location>
        <begin position="89"/>
        <end position="91"/>
    </location>
</feature>
<feature type="strand" evidence="35">
    <location>
        <begin position="94"/>
        <end position="105"/>
    </location>
</feature>
<feature type="strand" evidence="35">
    <location>
        <begin position="123"/>
        <end position="134"/>
    </location>
</feature>
<feature type="strand" evidence="35">
    <location>
        <begin position="136"/>
        <end position="142"/>
    </location>
</feature>
<feature type="strand" evidence="35">
    <location>
        <begin position="147"/>
        <end position="151"/>
    </location>
</feature>
<feature type="strand" evidence="35">
    <location>
        <begin position="154"/>
        <end position="157"/>
    </location>
</feature>
<feature type="helix" evidence="35">
    <location>
        <begin position="161"/>
        <end position="168"/>
    </location>
</feature>
<feature type="helix" evidence="35">
    <location>
        <begin position="174"/>
        <end position="176"/>
    </location>
</feature>
<feature type="turn" evidence="35">
    <location>
        <begin position="177"/>
        <end position="179"/>
    </location>
</feature>
<feature type="strand" evidence="35">
    <location>
        <begin position="180"/>
        <end position="183"/>
    </location>
</feature>
<feature type="strand" evidence="35">
    <location>
        <begin position="192"/>
        <end position="195"/>
    </location>
</feature>
<feature type="strand" evidence="35">
    <location>
        <begin position="197"/>
        <end position="200"/>
    </location>
</feature>
<feature type="strand" evidence="35">
    <location>
        <begin position="207"/>
        <end position="213"/>
    </location>
</feature>
<feature type="helix" evidence="35">
    <location>
        <begin position="217"/>
        <end position="219"/>
    </location>
</feature>
<feature type="helix" evidence="35">
    <location>
        <begin position="220"/>
        <end position="227"/>
    </location>
</feature>
<feature type="strand" evidence="35">
    <location>
        <begin position="228"/>
        <end position="230"/>
    </location>
</feature>
<feature type="strand" evidence="35">
    <location>
        <begin position="234"/>
        <end position="238"/>
    </location>
</feature>
<feature type="helix" evidence="35">
    <location>
        <begin position="250"/>
        <end position="258"/>
    </location>
</feature>
<feature type="strand" evidence="35">
    <location>
        <begin position="265"/>
        <end position="268"/>
    </location>
</feature>
<feature type="strand" evidence="35">
    <location>
        <begin position="285"/>
        <end position="291"/>
    </location>
</feature>
<feature type="strand" evidence="35">
    <location>
        <begin position="296"/>
        <end position="298"/>
    </location>
</feature>
<feature type="helix" evidence="35">
    <location>
        <begin position="302"/>
        <end position="305"/>
    </location>
</feature>
<feature type="strand" evidence="35">
    <location>
        <begin position="311"/>
        <end position="319"/>
    </location>
</feature>
<feature type="turn" evidence="35">
    <location>
        <begin position="329"/>
        <end position="331"/>
    </location>
</feature>
<feature type="strand" evidence="35">
    <location>
        <begin position="334"/>
        <end position="343"/>
    </location>
</feature>
<feature type="strand" evidence="35">
    <location>
        <begin position="346"/>
        <end position="348"/>
    </location>
</feature>
<feature type="strand" evidence="35">
    <location>
        <begin position="350"/>
        <end position="358"/>
    </location>
</feature>
<feature type="strand" evidence="35">
    <location>
        <begin position="366"/>
        <end position="370"/>
    </location>
</feature>
<feature type="helix" evidence="35">
    <location>
        <begin position="374"/>
        <end position="388"/>
    </location>
</feature>
<feature type="strand" evidence="35">
    <location>
        <begin position="391"/>
        <end position="397"/>
    </location>
</feature>
<feature type="turn" evidence="35">
    <location>
        <begin position="398"/>
        <end position="401"/>
    </location>
</feature>
<feature type="helix" evidence="35">
    <location>
        <begin position="402"/>
        <end position="412"/>
    </location>
</feature>
<feature type="turn" evidence="35">
    <location>
        <begin position="416"/>
        <end position="419"/>
    </location>
</feature>
<feature type="strand" evidence="35">
    <location>
        <begin position="422"/>
        <end position="424"/>
    </location>
</feature>
<feature type="strand" evidence="35">
    <location>
        <begin position="431"/>
        <end position="438"/>
    </location>
</feature>
<feature type="turn" evidence="35">
    <location>
        <begin position="439"/>
        <end position="441"/>
    </location>
</feature>
<feature type="strand" evidence="35">
    <location>
        <begin position="442"/>
        <end position="449"/>
    </location>
</feature>
<feature type="strand" evidence="35">
    <location>
        <begin position="455"/>
        <end position="458"/>
    </location>
</feature>
<feature type="helix" evidence="35">
    <location>
        <begin position="459"/>
        <end position="466"/>
    </location>
</feature>
<feature type="helix" evidence="35">
    <location>
        <begin position="474"/>
        <end position="481"/>
    </location>
</feature>
<feature type="helix" evidence="35">
    <location>
        <begin position="494"/>
        <end position="498"/>
    </location>
</feature>
<feature type="helix" evidence="35">
    <location>
        <begin position="502"/>
        <end position="525"/>
    </location>
</feature>
<feature type="helix" evidence="35">
    <location>
        <begin position="528"/>
        <end position="539"/>
    </location>
</feature>
<feature type="helix" evidence="35">
    <location>
        <begin position="545"/>
        <end position="547"/>
    </location>
</feature>
<feature type="helix" evidence="35">
    <location>
        <begin position="552"/>
        <end position="563"/>
    </location>
</feature>
<feature type="turn" evidence="35">
    <location>
        <begin position="564"/>
        <end position="567"/>
    </location>
</feature>
<feature type="strand" evidence="35">
    <location>
        <begin position="592"/>
        <end position="594"/>
    </location>
</feature>
<feature type="strand" evidence="35">
    <location>
        <begin position="598"/>
        <end position="605"/>
    </location>
</feature>
<feature type="helix" evidence="35">
    <location>
        <begin position="606"/>
        <end position="613"/>
    </location>
</feature>
<feature type="helix" evidence="35">
    <location>
        <begin position="618"/>
        <end position="620"/>
    </location>
</feature>
<feature type="turn" evidence="35">
    <location>
        <begin position="624"/>
        <end position="629"/>
    </location>
</feature>
<feature type="turn" evidence="35">
    <location>
        <begin position="634"/>
        <end position="636"/>
    </location>
</feature>
<feature type="strand" evidence="35">
    <location>
        <begin position="637"/>
        <end position="639"/>
    </location>
</feature>
<feature type="strand" evidence="35">
    <location>
        <begin position="641"/>
        <end position="643"/>
    </location>
</feature>
<feature type="strand" evidence="35">
    <location>
        <begin position="645"/>
        <end position="647"/>
    </location>
</feature>
<feature type="turn" evidence="35">
    <location>
        <begin position="649"/>
        <end position="651"/>
    </location>
</feature>
<feature type="helix" evidence="35">
    <location>
        <begin position="656"/>
        <end position="674"/>
    </location>
</feature>
<feature type="helix" evidence="35">
    <location>
        <begin position="680"/>
        <end position="704"/>
    </location>
</feature>
<feature type="strand" evidence="35">
    <location>
        <begin position="707"/>
        <end position="710"/>
    </location>
</feature>
<feature type="helix" evidence="35">
    <location>
        <begin position="714"/>
        <end position="738"/>
    </location>
</feature>
<feature type="turn" evidence="35">
    <location>
        <begin position="741"/>
        <end position="744"/>
    </location>
</feature>
<feature type="strand" evidence="35">
    <location>
        <begin position="745"/>
        <end position="747"/>
    </location>
</feature>
<feature type="strand" evidence="35">
    <location>
        <begin position="750"/>
        <end position="762"/>
    </location>
</feature>
<feature type="helix" evidence="35">
    <location>
        <begin position="768"/>
        <end position="782"/>
    </location>
</feature>
<feature type="strand" evidence="35">
    <location>
        <begin position="784"/>
        <end position="786"/>
    </location>
</feature>
<feature type="strand" evidence="35">
    <location>
        <begin position="792"/>
        <end position="805"/>
    </location>
</feature>
<feature type="strand" evidence="35">
    <location>
        <begin position="808"/>
        <end position="819"/>
    </location>
</feature>
<feature type="strand" evidence="35">
    <location>
        <begin position="824"/>
        <end position="829"/>
    </location>
</feature>
<feature type="turn" evidence="35">
    <location>
        <begin position="830"/>
        <end position="832"/>
    </location>
</feature>
<feature type="strand" evidence="35">
    <location>
        <begin position="834"/>
        <end position="836"/>
    </location>
</feature>
<feature type="helix" evidence="35">
    <location>
        <begin position="838"/>
        <end position="852"/>
    </location>
</feature>
<feature type="helix" evidence="35">
    <location>
        <begin position="857"/>
        <end position="872"/>
    </location>
</feature>
<feature type="turn" evidence="35">
    <location>
        <begin position="878"/>
        <end position="881"/>
    </location>
</feature>
<feature type="strand" evidence="35">
    <location>
        <begin position="883"/>
        <end position="886"/>
    </location>
</feature>
<feature type="turn" evidence="35">
    <location>
        <begin position="890"/>
        <end position="894"/>
    </location>
</feature>
<feature type="helix" evidence="35">
    <location>
        <begin position="899"/>
        <end position="905"/>
    </location>
</feature>
<feature type="strand" evidence="35">
    <location>
        <begin position="920"/>
        <end position="927"/>
    </location>
</feature>
<feature type="strand" evidence="35">
    <location>
        <begin position="937"/>
        <end position="940"/>
    </location>
</feature>
<feature type="helix" evidence="35">
    <location>
        <begin position="942"/>
        <end position="948"/>
    </location>
</feature>
<feature type="helix" evidence="35">
    <location>
        <begin position="954"/>
        <end position="959"/>
    </location>
</feature>
<feature type="turn" evidence="35">
    <location>
        <begin position="960"/>
        <end position="962"/>
    </location>
</feature>
<feature type="helix" evidence="35">
    <location>
        <begin position="963"/>
        <end position="970"/>
    </location>
</feature>
<feature type="helix" evidence="35">
    <location>
        <begin position="977"/>
        <end position="989"/>
    </location>
</feature>
<feature type="helix" evidence="35">
    <location>
        <begin position="1002"/>
        <end position="1004"/>
    </location>
</feature>
<feature type="turn" evidence="35">
    <location>
        <begin position="1013"/>
        <end position="1015"/>
    </location>
</feature>
<feature type="strand" evidence="35">
    <location>
        <begin position="1020"/>
        <end position="1022"/>
    </location>
</feature>
<feature type="helix" evidence="35">
    <location>
        <begin position="1034"/>
        <end position="1055"/>
    </location>
</feature>
<feature type="helix" evidence="35">
    <location>
        <begin position="1057"/>
        <end position="1062"/>
    </location>
</feature>
<feature type="strand" evidence="35">
    <location>
        <begin position="1065"/>
        <end position="1067"/>
    </location>
</feature>
<feature type="helix" evidence="35">
    <location>
        <begin position="1078"/>
        <end position="1095"/>
    </location>
</feature>